<name>ISCR_ECO7I</name>
<feature type="chain" id="PRO_1000138095" description="HTH-type transcriptional regulator IscR">
    <location>
        <begin position="1"/>
        <end position="162"/>
    </location>
</feature>
<feature type="domain" description="HTH rrf2-type" evidence="1">
    <location>
        <begin position="2"/>
        <end position="131"/>
    </location>
</feature>
<feature type="DNA-binding region" description="H-T-H motif" evidence="1">
    <location>
        <begin position="28"/>
        <end position="51"/>
    </location>
</feature>
<feature type="region of interest" description="Disordered" evidence="2">
    <location>
        <begin position="140"/>
        <end position="162"/>
    </location>
</feature>
<feature type="compositionally biased region" description="Basic and acidic residues" evidence="2">
    <location>
        <begin position="143"/>
        <end position="162"/>
    </location>
</feature>
<feature type="binding site" evidence="1">
    <location>
        <position position="92"/>
    </location>
    <ligand>
        <name>[2Fe-2S] cluster</name>
        <dbReference type="ChEBI" id="CHEBI:190135"/>
    </ligand>
</feature>
<feature type="binding site" evidence="1">
    <location>
        <position position="98"/>
    </location>
    <ligand>
        <name>[2Fe-2S] cluster</name>
        <dbReference type="ChEBI" id="CHEBI:190135"/>
    </ligand>
</feature>
<feature type="binding site" evidence="1">
    <location>
        <position position="104"/>
    </location>
    <ligand>
        <name>[2Fe-2S] cluster</name>
        <dbReference type="ChEBI" id="CHEBI:190135"/>
    </ligand>
</feature>
<evidence type="ECO:0000255" key="1">
    <source>
        <dbReference type="HAMAP-Rule" id="MF_01176"/>
    </source>
</evidence>
<evidence type="ECO:0000256" key="2">
    <source>
        <dbReference type="SAM" id="MobiDB-lite"/>
    </source>
</evidence>
<organism>
    <name type="scientific">Escherichia coli O7:K1 (strain IAI39 / ExPEC)</name>
    <dbReference type="NCBI Taxonomy" id="585057"/>
    <lineage>
        <taxon>Bacteria</taxon>
        <taxon>Pseudomonadati</taxon>
        <taxon>Pseudomonadota</taxon>
        <taxon>Gammaproteobacteria</taxon>
        <taxon>Enterobacterales</taxon>
        <taxon>Enterobacteriaceae</taxon>
        <taxon>Escherichia</taxon>
    </lineage>
</organism>
<dbReference type="EMBL" id="CU928164">
    <property type="protein sequence ID" value="CAR18854.1"/>
    <property type="molecule type" value="Genomic_DNA"/>
</dbReference>
<dbReference type="RefSeq" id="WP_001241357.1">
    <property type="nucleotide sequence ID" value="NC_011750.1"/>
</dbReference>
<dbReference type="RefSeq" id="YP_002408670.1">
    <property type="nucleotide sequence ID" value="NC_011750.1"/>
</dbReference>
<dbReference type="SMR" id="B7NRI0"/>
<dbReference type="STRING" id="585057.ECIAI39_2732"/>
<dbReference type="GeneID" id="86947421"/>
<dbReference type="KEGG" id="ect:ECIAI39_2732"/>
<dbReference type="PATRIC" id="fig|585057.6.peg.2841"/>
<dbReference type="HOGENOM" id="CLU_107144_0_0_6"/>
<dbReference type="Proteomes" id="UP000000749">
    <property type="component" value="Chromosome"/>
</dbReference>
<dbReference type="GO" id="GO:0005829">
    <property type="term" value="C:cytosol"/>
    <property type="evidence" value="ECO:0007669"/>
    <property type="project" value="TreeGrafter"/>
</dbReference>
<dbReference type="GO" id="GO:0051537">
    <property type="term" value="F:2 iron, 2 sulfur cluster binding"/>
    <property type="evidence" value="ECO:0007669"/>
    <property type="project" value="UniProtKB-KW"/>
</dbReference>
<dbReference type="GO" id="GO:0003700">
    <property type="term" value="F:DNA-binding transcription factor activity"/>
    <property type="evidence" value="ECO:0007669"/>
    <property type="project" value="UniProtKB-UniRule"/>
</dbReference>
<dbReference type="GO" id="GO:0003690">
    <property type="term" value="F:double-stranded DNA binding"/>
    <property type="evidence" value="ECO:0007669"/>
    <property type="project" value="UniProtKB-UniRule"/>
</dbReference>
<dbReference type="GO" id="GO:0005506">
    <property type="term" value="F:iron ion binding"/>
    <property type="evidence" value="ECO:0007669"/>
    <property type="project" value="UniProtKB-UniRule"/>
</dbReference>
<dbReference type="FunFam" id="1.10.10.10:FF:000026">
    <property type="entry name" value="HTH-type transcriptional regulator IscR"/>
    <property type="match status" value="1"/>
</dbReference>
<dbReference type="Gene3D" id="1.10.10.10">
    <property type="entry name" value="Winged helix-like DNA-binding domain superfamily/Winged helix DNA-binding domain"/>
    <property type="match status" value="1"/>
</dbReference>
<dbReference type="HAMAP" id="MF_01176">
    <property type="entry name" value="HTH_type_IscR"/>
    <property type="match status" value="1"/>
</dbReference>
<dbReference type="InterPro" id="IPR010242">
    <property type="entry name" value="TF_HTH_IscR"/>
</dbReference>
<dbReference type="InterPro" id="IPR030489">
    <property type="entry name" value="TR_Rrf2-type_CS"/>
</dbReference>
<dbReference type="InterPro" id="IPR000944">
    <property type="entry name" value="Tscrpt_reg_Rrf2"/>
</dbReference>
<dbReference type="InterPro" id="IPR036388">
    <property type="entry name" value="WH-like_DNA-bd_sf"/>
</dbReference>
<dbReference type="InterPro" id="IPR036390">
    <property type="entry name" value="WH_DNA-bd_sf"/>
</dbReference>
<dbReference type="NCBIfam" id="TIGR02010">
    <property type="entry name" value="IscR"/>
    <property type="match status" value="1"/>
</dbReference>
<dbReference type="NCBIfam" id="NF008110">
    <property type="entry name" value="PRK10857.1"/>
    <property type="match status" value="1"/>
</dbReference>
<dbReference type="NCBIfam" id="TIGR00738">
    <property type="entry name" value="rrf2_super"/>
    <property type="match status" value="1"/>
</dbReference>
<dbReference type="PANTHER" id="PTHR33221:SF5">
    <property type="entry name" value="HTH-TYPE TRANSCRIPTIONAL REGULATOR ISCR"/>
    <property type="match status" value="1"/>
</dbReference>
<dbReference type="PANTHER" id="PTHR33221">
    <property type="entry name" value="WINGED HELIX-TURN-HELIX TRANSCRIPTIONAL REGULATOR, RRF2 FAMILY"/>
    <property type="match status" value="1"/>
</dbReference>
<dbReference type="Pfam" id="PF02082">
    <property type="entry name" value="Rrf2"/>
    <property type="match status" value="1"/>
</dbReference>
<dbReference type="SUPFAM" id="SSF46785">
    <property type="entry name" value="Winged helix' DNA-binding domain"/>
    <property type="match status" value="1"/>
</dbReference>
<dbReference type="PROSITE" id="PS01332">
    <property type="entry name" value="HTH_RRF2_1"/>
    <property type="match status" value="1"/>
</dbReference>
<dbReference type="PROSITE" id="PS51197">
    <property type="entry name" value="HTH_RRF2_2"/>
    <property type="match status" value="1"/>
</dbReference>
<sequence>MRLTSKGRYAVTAMLDVALNSEAGPVPLADISERQGISLSYLEQLFSRLRKNGLVSSVRGPGGGYLLGKDASSIAVGEVISAVDESVDATRCQGKGGCQGGDKCLTHALWRDLSDRLTGFLNNITLGELVNNQEVLDVSGRQHTHDAPRTRTQDAIDVKLRA</sequence>
<proteinExistence type="inferred from homology"/>
<protein>
    <recommendedName>
        <fullName evidence="1">HTH-type transcriptional regulator IscR</fullName>
    </recommendedName>
</protein>
<keyword id="KW-0001">2Fe-2S</keyword>
<keyword id="KW-0010">Activator</keyword>
<keyword id="KW-0238">DNA-binding</keyword>
<keyword id="KW-0408">Iron</keyword>
<keyword id="KW-0411">Iron-sulfur</keyword>
<keyword id="KW-0479">Metal-binding</keyword>
<keyword id="KW-0678">Repressor</keyword>
<keyword id="KW-0804">Transcription</keyword>
<keyword id="KW-0805">Transcription regulation</keyword>
<accession>B7NRI0</accession>
<comment type="function">
    <text evidence="1">Regulates the transcription of several operons and genes involved in the biogenesis of Fe-S clusters and Fe-S-containing proteins.</text>
</comment>
<comment type="cofactor">
    <cofactor evidence="1">
        <name>[2Fe-2S] cluster</name>
        <dbReference type="ChEBI" id="CHEBI:190135"/>
    </cofactor>
    <text evidence="1">Binds 1 [2Fe-2S] cluster.</text>
</comment>
<reference key="1">
    <citation type="journal article" date="2009" name="PLoS Genet.">
        <title>Organised genome dynamics in the Escherichia coli species results in highly diverse adaptive paths.</title>
        <authorList>
            <person name="Touchon M."/>
            <person name="Hoede C."/>
            <person name="Tenaillon O."/>
            <person name="Barbe V."/>
            <person name="Baeriswyl S."/>
            <person name="Bidet P."/>
            <person name="Bingen E."/>
            <person name="Bonacorsi S."/>
            <person name="Bouchier C."/>
            <person name="Bouvet O."/>
            <person name="Calteau A."/>
            <person name="Chiapello H."/>
            <person name="Clermont O."/>
            <person name="Cruveiller S."/>
            <person name="Danchin A."/>
            <person name="Diard M."/>
            <person name="Dossat C."/>
            <person name="Karoui M.E."/>
            <person name="Frapy E."/>
            <person name="Garry L."/>
            <person name="Ghigo J.M."/>
            <person name="Gilles A.M."/>
            <person name="Johnson J."/>
            <person name="Le Bouguenec C."/>
            <person name="Lescat M."/>
            <person name="Mangenot S."/>
            <person name="Martinez-Jehanne V."/>
            <person name="Matic I."/>
            <person name="Nassif X."/>
            <person name="Oztas S."/>
            <person name="Petit M.A."/>
            <person name="Pichon C."/>
            <person name="Rouy Z."/>
            <person name="Ruf C.S."/>
            <person name="Schneider D."/>
            <person name="Tourret J."/>
            <person name="Vacherie B."/>
            <person name="Vallenet D."/>
            <person name="Medigue C."/>
            <person name="Rocha E.P.C."/>
            <person name="Denamur E."/>
        </authorList>
    </citation>
    <scope>NUCLEOTIDE SEQUENCE [LARGE SCALE GENOMIC DNA]</scope>
    <source>
        <strain>IAI39 / ExPEC</strain>
    </source>
</reference>
<gene>
    <name evidence="1" type="primary">iscR</name>
    <name type="ordered locus">ECIAI39_2732</name>
</gene>